<evidence type="ECO:0000255" key="1">
    <source>
        <dbReference type="HAMAP-Rule" id="MF_00147"/>
    </source>
</evidence>
<sequence>MKVPIILVNFKVYETSYGRRGLEMAKIVEKVALETSTEIIIAVPATMITRVAESVTIPVYAQHVDGVPEGAHTGAVTPELIKDAGAKGSLLNHSERRVRMDEMDDALKRMKKLGLESVICVDRYELVAPMALLKPTAVLVEPPELIGTGVSVSKARPEVITSAVDEIRKVQGVYLIAGAGITSGEDVYVAMKLGSDGVGAASAIMKAKEPQKVLLDFVNGAIRALEER</sequence>
<proteinExistence type="inferred from homology"/>
<comment type="function">
    <text evidence="1">Involved in the gluconeogenesis. Catalyzes stereospecifically the conversion of dihydroxyacetone phosphate (DHAP) to D-glyceraldehyde-3-phosphate (G3P).</text>
</comment>
<comment type="catalytic activity">
    <reaction evidence="1">
        <text>D-glyceraldehyde 3-phosphate = dihydroxyacetone phosphate</text>
        <dbReference type="Rhea" id="RHEA:18585"/>
        <dbReference type="ChEBI" id="CHEBI:57642"/>
        <dbReference type="ChEBI" id="CHEBI:59776"/>
        <dbReference type="EC" id="5.3.1.1"/>
    </reaction>
</comment>
<comment type="pathway">
    <text evidence="1">Carbohydrate biosynthesis; gluconeogenesis.</text>
</comment>
<comment type="pathway">
    <text evidence="1">Carbohydrate degradation; glycolysis; D-glyceraldehyde 3-phosphate from glycerone phosphate: step 1/1.</text>
</comment>
<comment type="subunit">
    <text evidence="1">Homotetramer; dimer of dimers.</text>
</comment>
<comment type="subcellular location">
    <subcellularLocation>
        <location evidence="1">Cytoplasm</location>
    </subcellularLocation>
</comment>
<comment type="similarity">
    <text evidence="1">Belongs to the triosephosphate isomerase family.</text>
</comment>
<name>TPIS_METS5</name>
<reference key="1">
    <citation type="journal article" date="2008" name="Appl. Environ. Microbiol.">
        <title>The genome sequence of the metal-mobilizing, extremely thermoacidophilic archaeon Metallosphaera sedula provides insights into bioleaching-associated metabolism.</title>
        <authorList>
            <person name="Auernik K.S."/>
            <person name="Maezato Y."/>
            <person name="Blum P.H."/>
            <person name="Kelly R.M."/>
        </authorList>
    </citation>
    <scope>NUCLEOTIDE SEQUENCE [LARGE SCALE GENOMIC DNA]</scope>
    <source>
        <strain>ATCC 51363 / DSM 5348 / JCM 9185 / NBRC 15509 / TH2</strain>
    </source>
</reference>
<keyword id="KW-0963">Cytoplasm</keyword>
<keyword id="KW-0312">Gluconeogenesis</keyword>
<keyword id="KW-0324">Glycolysis</keyword>
<keyword id="KW-0413">Isomerase</keyword>
<keyword id="KW-1185">Reference proteome</keyword>
<gene>
    <name evidence="1" type="primary">tpiA</name>
    <name type="ordered locus">Msed_1451</name>
</gene>
<accession>A4YGQ6</accession>
<dbReference type="EC" id="5.3.1.1" evidence="1"/>
<dbReference type="EMBL" id="CP000682">
    <property type="protein sequence ID" value="ABP95608.1"/>
    <property type="molecule type" value="Genomic_DNA"/>
</dbReference>
<dbReference type="RefSeq" id="WP_012021395.1">
    <property type="nucleotide sequence ID" value="NC_009440.1"/>
</dbReference>
<dbReference type="SMR" id="A4YGQ6"/>
<dbReference type="STRING" id="399549.Msed_1451"/>
<dbReference type="GeneID" id="91755953"/>
<dbReference type="KEGG" id="mse:Msed_1451"/>
<dbReference type="eggNOG" id="arCOG01087">
    <property type="taxonomic scope" value="Archaea"/>
</dbReference>
<dbReference type="HOGENOM" id="CLU_104921_0_0_2"/>
<dbReference type="UniPathway" id="UPA00109">
    <property type="reaction ID" value="UER00189"/>
</dbReference>
<dbReference type="UniPathway" id="UPA00138"/>
<dbReference type="Proteomes" id="UP000000242">
    <property type="component" value="Chromosome"/>
</dbReference>
<dbReference type="GO" id="GO:0005829">
    <property type="term" value="C:cytosol"/>
    <property type="evidence" value="ECO:0007669"/>
    <property type="project" value="TreeGrafter"/>
</dbReference>
<dbReference type="GO" id="GO:0004807">
    <property type="term" value="F:triose-phosphate isomerase activity"/>
    <property type="evidence" value="ECO:0007669"/>
    <property type="project" value="UniProtKB-UniRule"/>
</dbReference>
<dbReference type="GO" id="GO:0006094">
    <property type="term" value="P:gluconeogenesis"/>
    <property type="evidence" value="ECO:0007669"/>
    <property type="project" value="UniProtKB-UniRule"/>
</dbReference>
<dbReference type="GO" id="GO:0046166">
    <property type="term" value="P:glyceraldehyde-3-phosphate biosynthetic process"/>
    <property type="evidence" value="ECO:0007669"/>
    <property type="project" value="TreeGrafter"/>
</dbReference>
<dbReference type="GO" id="GO:0019563">
    <property type="term" value="P:glycerol catabolic process"/>
    <property type="evidence" value="ECO:0007669"/>
    <property type="project" value="TreeGrafter"/>
</dbReference>
<dbReference type="GO" id="GO:0006096">
    <property type="term" value="P:glycolytic process"/>
    <property type="evidence" value="ECO:0007669"/>
    <property type="project" value="UniProtKB-UniRule"/>
</dbReference>
<dbReference type="CDD" id="cd00311">
    <property type="entry name" value="TIM"/>
    <property type="match status" value="1"/>
</dbReference>
<dbReference type="FunFam" id="3.20.20.70:FF:000223">
    <property type="entry name" value="Triosephosphate isomerase"/>
    <property type="match status" value="1"/>
</dbReference>
<dbReference type="Gene3D" id="3.20.20.70">
    <property type="entry name" value="Aldolase class I"/>
    <property type="match status" value="1"/>
</dbReference>
<dbReference type="HAMAP" id="MF_00147_A">
    <property type="entry name" value="TIM_A"/>
    <property type="match status" value="1"/>
</dbReference>
<dbReference type="InterPro" id="IPR013785">
    <property type="entry name" value="Aldolase_TIM"/>
</dbReference>
<dbReference type="InterPro" id="IPR035990">
    <property type="entry name" value="TIM_sf"/>
</dbReference>
<dbReference type="InterPro" id="IPR000652">
    <property type="entry name" value="Triosephosphate_isomerase"/>
</dbReference>
<dbReference type="InterPro" id="IPR022891">
    <property type="entry name" value="Triosephosphate_isomerase_arc"/>
</dbReference>
<dbReference type="NCBIfam" id="NF003302">
    <property type="entry name" value="PRK04302.1"/>
    <property type="match status" value="1"/>
</dbReference>
<dbReference type="NCBIfam" id="TIGR00419">
    <property type="entry name" value="tim"/>
    <property type="match status" value="1"/>
</dbReference>
<dbReference type="PANTHER" id="PTHR21139">
    <property type="entry name" value="TRIOSEPHOSPHATE ISOMERASE"/>
    <property type="match status" value="1"/>
</dbReference>
<dbReference type="PANTHER" id="PTHR21139:SF42">
    <property type="entry name" value="TRIOSEPHOSPHATE ISOMERASE"/>
    <property type="match status" value="1"/>
</dbReference>
<dbReference type="Pfam" id="PF00121">
    <property type="entry name" value="TIM"/>
    <property type="match status" value="1"/>
</dbReference>
<dbReference type="SUPFAM" id="SSF51351">
    <property type="entry name" value="Triosephosphate isomerase (TIM)"/>
    <property type="match status" value="1"/>
</dbReference>
<dbReference type="PROSITE" id="PS51440">
    <property type="entry name" value="TIM_2"/>
    <property type="match status" value="1"/>
</dbReference>
<feature type="chain" id="PRO_1000071491" description="Triosephosphate isomerase">
    <location>
        <begin position="1"/>
        <end position="228"/>
    </location>
</feature>
<feature type="active site" description="Electrophile" evidence="1">
    <location>
        <position position="93"/>
    </location>
</feature>
<feature type="active site" description="Proton acceptor" evidence="1">
    <location>
        <position position="141"/>
    </location>
</feature>
<feature type="binding site" evidence="1">
    <location>
        <begin position="9"/>
        <end position="11"/>
    </location>
    <ligand>
        <name>substrate</name>
    </ligand>
</feature>
<feature type="binding site" evidence="1">
    <location>
        <position position="146"/>
    </location>
    <ligand>
        <name>substrate</name>
    </ligand>
</feature>
<feature type="binding site" evidence="1">
    <location>
        <position position="180"/>
    </location>
    <ligand>
        <name>substrate</name>
    </ligand>
</feature>
<feature type="binding site" evidence="1">
    <location>
        <begin position="201"/>
        <end position="202"/>
    </location>
    <ligand>
        <name>substrate</name>
    </ligand>
</feature>
<protein>
    <recommendedName>
        <fullName evidence="1">Triosephosphate isomerase</fullName>
        <shortName evidence="1">TIM</shortName>
        <shortName evidence="1">TPI</shortName>
        <ecNumber evidence="1">5.3.1.1</ecNumber>
    </recommendedName>
    <alternativeName>
        <fullName evidence="1">Triose-phosphate isomerase</fullName>
    </alternativeName>
</protein>
<organism>
    <name type="scientific">Metallosphaera sedula (strain ATCC 51363 / DSM 5348 / JCM 9185 / NBRC 15509 / TH2)</name>
    <dbReference type="NCBI Taxonomy" id="399549"/>
    <lineage>
        <taxon>Archaea</taxon>
        <taxon>Thermoproteota</taxon>
        <taxon>Thermoprotei</taxon>
        <taxon>Sulfolobales</taxon>
        <taxon>Sulfolobaceae</taxon>
        <taxon>Metallosphaera</taxon>
    </lineage>
</organism>